<dbReference type="EC" id="3.1.11.6" evidence="1"/>
<dbReference type="EMBL" id="CP000253">
    <property type="protein sequence ID" value="ABD30697.1"/>
    <property type="molecule type" value="Genomic_DNA"/>
</dbReference>
<dbReference type="RefSeq" id="WP_000159865.1">
    <property type="nucleotide sequence ID" value="NZ_LS483365.1"/>
</dbReference>
<dbReference type="RefSeq" id="YP_500133.1">
    <property type="nucleotide sequence ID" value="NC_007795.1"/>
</dbReference>
<dbReference type="SMR" id="Q2FY47"/>
<dbReference type="STRING" id="93061.SAOUHSC_01619"/>
<dbReference type="PaxDb" id="1280-SAXN108_1546"/>
<dbReference type="GeneID" id="3919957"/>
<dbReference type="KEGG" id="sao:SAOUHSC_01619"/>
<dbReference type="PATRIC" id="fig|93061.5.peg.1473"/>
<dbReference type="eggNOG" id="COG1722">
    <property type="taxonomic scope" value="Bacteria"/>
</dbReference>
<dbReference type="HOGENOM" id="CLU_145918_3_2_9"/>
<dbReference type="OrthoDB" id="9798666at2"/>
<dbReference type="PRO" id="PR:Q2FY47"/>
<dbReference type="Proteomes" id="UP000008816">
    <property type="component" value="Chromosome"/>
</dbReference>
<dbReference type="GO" id="GO:0005829">
    <property type="term" value="C:cytosol"/>
    <property type="evidence" value="ECO:0000318"/>
    <property type="project" value="GO_Central"/>
</dbReference>
<dbReference type="GO" id="GO:0009318">
    <property type="term" value="C:exodeoxyribonuclease VII complex"/>
    <property type="evidence" value="ECO:0007669"/>
    <property type="project" value="InterPro"/>
</dbReference>
<dbReference type="GO" id="GO:0008855">
    <property type="term" value="F:exodeoxyribonuclease VII activity"/>
    <property type="evidence" value="ECO:0000318"/>
    <property type="project" value="GO_Central"/>
</dbReference>
<dbReference type="GO" id="GO:0006308">
    <property type="term" value="P:DNA catabolic process"/>
    <property type="evidence" value="ECO:0007669"/>
    <property type="project" value="UniProtKB-UniRule"/>
</dbReference>
<dbReference type="FunFam" id="1.10.287.1040:FF:000006">
    <property type="entry name" value="Exodeoxyribonuclease 7 small subunit"/>
    <property type="match status" value="1"/>
</dbReference>
<dbReference type="Gene3D" id="1.10.287.1040">
    <property type="entry name" value="Exonuclease VII, small subunit"/>
    <property type="match status" value="1"/>
</dbReference>
<dbReference type="HAMAP" id="MF_00337">
    <property type="entry name" value="Exonuc_7_S"/>
    <property type="match status" value="1"/>
</dbReference>
<dbReference type="InterPro" id="IPR003761">
    <property type="entry name" value="Exonuc_VII_S"/>
</dbReference>
<dbReference type="InterPro" id="IPR037004">
    <property type="entry name" value="Exonuc_VII_ssu_sf"/>
</dbReference>
<dbReference type="NCBIfam" id="NF002140">
    <property type="entry name" value="PRK00977.1-4"/>
    <property type="match status" value="1"/>
</dbReference>
<dbReference type="NCBIfam" id="NF010671">
    <property type="entry name" value="PRK14068.1"/>
    <property type="match status" value="1"/>
</dbReference>
<dbReference type="NCBIfam" id="TIGR01280">
    <property type="entry name" value="xseB"/>
    <property type="match status" value="1"/>
</dbReference>
<dbReference type="PANTHER" id="PTHR34137">
    <property type="entry name" value="EXODEOXYRIBONUCLEASE 7 SMALL SUBUNIT"/>
    <property type="match status" value="1"/>
</dbReference>
<dbReference type="PANTHER" id="PTHR34137:SF1">
    <property type="entry name" value="EXODEOXYRIBONUCLEASE 7 SMALL SUBUNIT"/>
    <property type="match status" value="1"/>
</dbReference>
<dbReference type="Pfam" id="PF02609">
    <property type="entry name" value="Exonuc_VII_S"/>
    <property type="match status" value="1"/>
</dbReference>
<dbReference type="PIRSF" id="PIRSF006488">
    <property type="entry name" value="Exonuc_VII_S"/>
    <property type="match status" value="1"/>
</dbReference>
<dbReference type="SUPFAM" id="SSF116842">
    <property type="entry name" value="XseB-like"/>
    <property type="match status" value="1"/>
</dbReference>
<feature type="chain" id="PRO_0000303751" description="Exodeoxyribonuclease 7 small subunit">
    <location>
        <begin position="1"/>
        <end position="76"/>
    </location>
</feature>
<comment type="function">
    <text evidence="1">Bidirectionally degrades single-stranded DNA into large acid-insoluble oligonucleotides, which are then degraded further into small acid-soluble oligonucleotides.</text>
</comment>
<comment type="catalytic activity">
    <reaction evidence="1">
        <text>Exonucleolytic cleavage in either 5'- to 3'- or 3'- to 5'-direction to yield nucleoside 5'-phosphates.</text>
        <dbReference type="EC" id="3.1.11.6"/>
    </reaction>
</comment>
<comment type="subunit">
    <text evidence="1">Heterooligomer composed of large and small subunits.</text>
</comment>
<comment type="subcellular location">
    <subcellularLocation>
        <location evidence="1">Cytoplasm</location>
    </subcellularLocation>
</comment>
<comment type="similarity">
    <text evidence="1">Belongs to the XseB family.</text>
</comment>
<keyword id="KW-0963">Cytoplasm</keyword>
<keyword id="KW-0269">Exonuclease</keyword>
<keyword id="KW-0378">Hydrolase</keyword>
<keyword id="KW-0540">Nuclease</keyword>
<keyword id="KW-1185">Reference proteome</keyword>
<name>EX7S_STAA8</name>
<reference key="1">
    <citation type="book" date="2006" name="Gram positive pathogens, 2nd edition">
        <title>The Staphylococcus aureus NCTC 8325 genome.</title>
        <editorList>
            <person name="Fischetti V."/>
            <person name="Novick R."/>
            <person name="Ferretti J."/>
            <person name="Portnoy D."/>
            <person name="Rood J."/>
        </editorList>
        <authorList>
            <person name="Gillaspy A.F."/>
            <person name="Worrell V."/>
            <person name="Orvis J."/>
            <person name="Roe B.A."/>
            <person name="Dyer D.W."/>
            <person name="Iandolo J.J."/>
        </authorList>
    </citation>
    <scope>NUCLEOTIDE SEQUENCE [LARGE SCALE GENOMIC DNA]</scope>
    <source>
        <strain>NCTC 8325 / PS 47</strain>
    </source>
</reference>
<sequence>MTKETQSFEEMMQELEQIVQKLDNETVSLEESLDLYQRGMKLSAACDTTLKNAEKKVNDLIKEEAEDVKNDESTDE</sequence>
<protein>
    <recommendedName>
        <fullName evidence="1">Exodeoxyribonuclease 7 small subunit</fullName>
        <ecNumber evidence="1">3.1.11.6</ecNumber>
    </recommendedName>
    <alternativeName>
        <fullName evidence="1">Exodeoxyribonuclease VII small subunit</fullName>
        <shortName evidence="1">Exonuclease VII small subunit</shortName>
    </alternativeName>
</protein>
<proteinExistence type="inferred from homology"/>
<gene>
    <name evidence="1" type="primary">xseB</name>
    <name type="ordered locus">SAOUHSC_01619</name>
</gene>
<evidence type="ECO:0000255" key="1">
    <source>
        <dbReference type="HAMAP-Rule" id="MF_00337"/>
    </source>
</evidence>
<organism>
    <name type="scientific">Staphylococcus aureus (strain NCTC 8325 / PS 47)</name>
    <dbReference type="NCBI Taxonomy" id="93061"/>
    <lineage>
        <taxon>Bacteria</taxon>
        <taxon>Bacillati</taxon>
        <taxon>Bacillota</taxon>
        <taxon>Bacilli</taxon>
        <taxon>Bacillales</taxon>
        <taxon>Staphylococcaceae</taxon>
        <taxon>Staphylococcus</taxon>
    </lineage>
</organism>
<accession>Q2FY47</accession>